<feature type="chain" id="PRO_0000112820" description="Acetylornithine aminotransferase">
    <location>
        <begin position="1"/>
        <end position="395"/>
    </location>
</feature>
<feature type="binding site" evidence="1">
    <location>
        <begin position="117"/>
        <end position="118"/>
    </location>
    <ligand>
        <name>pyridoxal 5'-phosphate</name>
        <dbReference type="ChEBI" id="CHEBI:597326"/>
    </ligand>
</feature>
<feature type="binding site" evidence="1">
    <location>
        <position position="144"/>
    </location>
    <ligand>
        <name>pyridoxal 5'-phosphate</name>
        <dbReference type="ChEBI" id="CHEBI:597326"/>
    </ligand>
</feature>
<feature type="binding site" evidence="1">
    <location>
        <position position="147"/>
    </location>
    <ligand>
        <name>N(2)-acetyl-L-ornithine</name>
        <dbReference type="ChEBI" id="CHEBI:57805"/>
    </ligand>
</feature>
<feature type="binding site" evidence="1">
    <location>
        <begin position="230"/>
        <end position="233"/>
    </location>
    <ligand>
        <name>pyridoxal 5'-phosphate</name>
        <dbReference type="ChEBI" id="CHEBI:597326"/>
    </ligand>
</feature>
<feature type="binding site" evidence="1">
    <location>
        <position position="285"/>
    </location>
    <ligand>
        <name>N(2)-acetyl-L-ornithine</name>
        <dbReference type="ChEBI" id="CHEBI:57805"/>
    </ligand>
</feature>
<feature type="binding site" evidence="1">
    <location>
        <position position="286"/>
    </location>
    <ligand>
        <name>pyridoxal 5'-phosphate</name>
        <dbReference type="ChEBI" id="CHEBI:597326"/>
    </ligand>
</feature>
<feature type="modified residue" description="N6-(pyridoxal phosphate)lysine" evidence="1">
    <location>
        <position position="259"/>
    </location>
</feature>
<keyword id="KW-0028">Amino-acid biosynthesis</keyword>
<keyword id="KW-0032">Aminotransferase</keyword>
<keyword id="KW-0055">Arginine biosynthesis</keyword>
<keyword id="KW-0963">Cytoplasm</keyword>
<keyword id="KW-0663">Pyridoxal phosphate</keyword>
<keyword id="KW-1185">Reference proteome</keyword>
<keyword id="KW-0808">Transferase</keyword>
<accession>Q8TUE8</accession>
<gene>
    <name evidence="1" type="primary">argD</name>
    <name type="ordered locus">MA_0119</name>
</gene>
<dbReference type="EC" id="2.6.1.11" evidence="1"/>
<dbReference type="EMBL" id="AE010299">
    <property type="protein sequence ID" value="AAM03573.1"/>
    <property type="status" value="ALT_INIT"/>
    <property type="molecule type" value="Genomic_DNA"/>
</dbReference>
<dbReference type="RefSeq" id="WP_048066055.1">
    <property type="nucleotide sequence ID" value="NC_003552.1"/>
</dbReference>
<dbReference type="SMR" id="Q8TUE8"/>
<dbReference type="FunCoup" id="Q8TUE8">
    <property type="interactions" value="190"/>
</dbReference>
<dbReference type="STRING" id="188937.MA_0119"/>
<dbReference type="EnsemblBacteria" id="AAM03573">
    <property type="protein sequence ID" value="AAM03573"/>
    <property type="gene ID" value="MA_0119"/>
</dbReference>
<dbReference type="GeneID" id="1472011"/>
<dbReference type="KEGG" id="mac:MA_0119"/>
<dbReference type="HOGENOM" id="CLU_016922_10_1_2"/>
<dbReference type="InParanoid" id="Q8TUE8"/>
<dbReference type="OrthoDB" id="85346at2157"/>
<dbReference type="PhylomeDB" id="Q8TUE8"/>
<dbReference type="UniPathway" id="UPA00068">
    <property type="reaction ID" value="UER00109"/>
</dbReference>
<dbReference type="Proteomes" id="UP000002487">
    <property type="component" value="Chromosome"/>
</dbReference>
<dbReference type="GO" id="GO:0005737">
    <property type="term" value="C:cytoplasm"/>
    <property type="evidence" value="ECO:0007669"/>
    <property type="project" value="UniProtKB-SubCell"/>
</dbReference>
<dbReference type="GO" id="GO:0042802">
    <property type="term" value="F:identical protein binding"/>
    <property type="evidence" value="ECO:0000318"/>
    <property type="project" value="GO_Central"/>
</dbReference>
<dbReference type="GO" id="GO:0003992">
    <property type="term" value="F:N2-acetyl-L-ornithine:2-oxoglutarate 5-aminotransferase activity"/>
    <property type="evidence" value="ECO:0007669"/>
    <property type="project" value="UniProtKB-UniRule"/>
</dbReference>
<dbReference type="GO" id="GO:0030170">
    <property type="term" value="F:pyridoxal phosphate binding"/>
    <property type="evidence" value="ECO:0000318"/>
    <property type="project" value="GO_Central"/>
</dbReference>
<dbReference type="GO" id="GO:0006526">
    <property type="term" value="P:L-arginine biosynthetic process"/>
    <property type="evidence" value="ECO:0007669"/>
    <property type="project" value="UniProtKB-UniRule"/>
</dbReference>
<dbReference type="CDD" id="cd00610">
    <property type="entry name" value="OAT_like"/>
    <property type="match status" value="1"/>
</dbReference>
<dbReference type="FunFam" id="3.40.640.10:FF:000004">
    <property type="entry name" value="Acetylornithine aminotransferase"/>
    <property type="match status" value="1"/>
</dbReference>
<dbReference type="Gene3D" id="3.90.1150.10">
    <property type="entry name" value="Aspartate Aminotransferase, domain 1"/>
    <property type="match status" value="1"/>
</dbReference>
<dbReference type="Gene3D" id="3.40.640.10">
    <property type="entry name" value="Type I PLP-dependent aspartate aminotransferase-like (Major domain)"/>
    <property type="match status" value="1"/>
</dbReference>
<dbReference type="HAMAP" id="MF_01107">
    <property type="entry name" value="ArgD_aminotrans_3"/>
    <property type="match status" value="1"/>
</dbReference>
<dbReference type="InterPro" id="IPR004636">
    <property type="entry name" value="AcOrn/SuccOrn_fam"/>
</dbReference>
<dbReference type="InterPro" id="IPR005814">
    <property type="entry name" value="Aminotrans_3"/>
</dbReference>
<dbReference type="InterPro" id="IPR049704">
    <property type="entry name" value="Aminotrans_3_PPA_site"/>
</dbReference>
<dbReference type="InterPro" id="IPR050103">
    <property type="entry name" value="Class-III_PLP-dep_AT"/>
</dbReference>
<dbReference type="InterPro" id="IPR015424">
    <property type="entry name" value="PyrdxlP-dep_Trfase"/>
</dbReference>
<dbReference type="InterPro" id="IPR015421">
    <property type="entry name" value="PyrdxlP-dep_Trfase_major"/>
</dbReference>
<dbReference type="InterPro" id="IPR015422">
    <property type="entry name" value="PyrdxlP-dep_Trfase_small"/>
</dbReference>
<dbReference type="NCBIfam" id="TIGR00707">
    <property type="entry name" value="argD"/>
    <property type="match status" value="1"/>
</dbReference>
<dbReference type="NCBIfam" id="NF002325">
    <property type="entry name" value="PRK01278.1"/>
    <property type="match status" value="1"/>
</dbReference>
<dbReference type="NCBIfam" id="NF002874">
    <property type="entry name" value="PRK03244.1"/>
    <property type="match status" value="1"/>
</dbReference>
<dbReference type="PANTHER" id="PTHR11986:SF79">
    <property type="entry name" value="ACETYLORNITHINE AMINOTRANSFERASE, MITOCHONDRIAL"/>
    <property type="match status" value="1"/>
</dbReference>
<dbReference type="PANTHER" id="PTHR11986">
    <property type="entry name" value="AMINOTRANSFERASE CLASS III"/>
    <property type="match status" value="1"/>
</dbReference>
<dbReference type="Pfam" id="PF00202">
    <property type="entry name" value="Aminotran_3"/>
    <property type="match status" value="1"/>
</dbReference>
<dbReference type="PIRSF" id="PIRSF000521">
    <property type="entry name" value="Transaminase_4ab_Lys_Orn"/>
    <property type="match status" value="1"/>
</dbReference>
<dbReference type="SUPFAM" id="SSF53383">
    <property type="entry name" value="PLP-dependent transferases"/>
    <property type="match status" value="1"/>
</dbReference>
<dbReference type="PROSITE" id="PS00600">
    <property type="entry name" value="AA_TRANSFER_CLASS_3"/>
    <property type="match status" value="1"/>
</dbReference>
<name>ARGD_METAC</name>
<reference key="1">
    <citation type="journal article" date="2002" name="Genome Res.">
        <title>The genome of Methanosarcina acetivorans reveals extensive metabolic and physiological diversity.</title>
        <authorList>
            <person name="Galagan J.E."/>
            <person name="Nusbaum C."/>
            <person name="Roy A."/>
            <person name="Endrizzi M.G."/>
            <person name="Macdonald P."/>
            <person name="FitzHugh W."/>
            <person name="Calvo S."/>
            <person name="Engels R."/>
            <person name="Smirnov S."/>
            <person name="Atnoor D."/>
            <person name="Brown A."/>
            <person name="Allen N."/>
            <person name="Naylor J."/>
            <person name="Stange-Thomann N."/>
            <person name="DeArellano K."/>
            <person name="Johnson R."/>
            <person name="Linton L."/>
            <person name="McEwan P."/>
            <person name="McKernan K."/>
            <person name="Talamas J."/>
            <person name="Tirrell A."/>
            <person name="Ye W."/>
            <person name="Zimmer A."/>
            <person name="Barber R.D."/>
            <person name="Cann I."/>
            <person name="Graham D.E."/>
            <person name="Grahame D.A."/>
            <person name="Guss A.M."/>
            <person name="Hedderich R."/>
            <person name="Ingram-Smith C."/>
            <person name="Kuettner H.C."/>
            <person name="Krzycki J.A."/>
            <person name="Leigh J.A."/>
            <person name="Li W."/>
            <person name="Liu J."/>
            <person name="Mukhopadhyay B."/>
            <person name="Reeve J.N."/>
            <person name="Smith K."/>
            <person name="Springer T.A."/>
            <person name="Umayam L.A."/>
            <person name="White O."/>
            <person name="White R.H."/>
            <person name="de Macario E.C."/>
            <person name="Ferry J.G."/>
            <person name="Jarrell K.F."/>
            <person name="Jing H."/>
            <person name="Macario A.J.L."/>
            <person name="Paulsen I.T."/>
            <person name="Pritchett M."/>
            <person name="Sowers K.R."/>
            <person name="Swanson R.V."/>
            <person name="Zinder S.H."/>
            <person name="Lander E."/>
            <person name="Metcalf W.W."/>
            <person name="Birren B."/>
        </authorList>
    </citation>
    <scope>NUCLEOTIDE SEQUENCE [LARGE SCALE GENOMIC DNA]</scope>
    <source>
        <strain>ATCC 35395 / DSM 2834 / JCM 12185 / C2A</strain>
    </source>
</reference>
<evidence type="ECO:0000255" key="1">
    <source>
        <dbReference type="HAMAP-Rule" id="MF_01107"/>
    </source>
</evidence>
<evidence type="ECO:0000305" key="2"/>
<comment type="catalytic activity">
    <reaction evidence="1">
        <text>N(2)-acetyl-L-ornithine + 2-oxoglutarate = N-acetyl-L-glutamate 5-semialdehyde + L-glutamate</text>
        <dbReference type="Rhea" id="RHEA:18049"/>
        <dbReference type="ChEBI" id="CHEBI:16810"/>
        <dbReference type="ChEBI" id="CHEBI:29123"/>
        <dbReference type="ChEBI" id="CHEBI:29985"/>
        <dbReference type="ChEBI" id="CHEBI:57805"/>
        <dbReference type="EC" id="2.6.1.11"/>
    </reaction>
</comment>
<comment type="cofactor">
    <cofactor evidence="1">
        <name>pyridoxal 5'-phosphate</name>
        <dbReference type="ChEBI" id="CHEBI:597326"/>
    </cofactor>
    <text evidence="1">Binds 1 pyridoxal phosphate per subunit.</text>
</comment>
<comment type="pathway">
    <text evidence="1">Amino-acid biosynthesis; L-arginine biosynthesis; N(2)-acetyl-L-ornithine from L-glutamate: step 4/4.</text>
</comment>
<comment type="subunit">
    <text evidence="1">Homodimer.</text>
</comment>
<comment type="subcellular location">
    <subcellularLocation>
        <location evidence="1">Cytoplasm</location>
    </subcellularLocation>
</comment>
<comment type="miscellaneous">
    <text evidence="1">May also have succinyldiaminopimelate aminotransferase activity, thus carrying out the corresponding step in lysine biosynthesis.</text>
</comment>
<comment type="similarity">
    <text evidence="1">Belongs to the class-III pyridoxal-phosphate-dependent aminotransferase family. ArgD subfamily.</text>
</comment>
<comment type="sequence caution" evidence="2">
    <conflict type="erroneous initiation">
        <sequence resource="EMBL-CDS" id="AAM03573"/>
    </conflict>
</comment>
<protein>
    <recommendedName>
        <fullName evidence="1">Acetylornithine aminotransferase</fullName>
        <shortName evidence="1">ACOAT</shortName>
        <ecNumber evidence="1">2.6.1.11</ecNumber>
    </recommendedName>
</protein>
<organism>
    <name type="scientific">Methanosarcina acetivorans (strain ATCC 35395 / DSM 2834 / JCM 12185 / C2A)</name>
    <dbReference type="NCBI Taxonomy" id="188937"/>
    <lineage>
        <taxon>Archaea</taxon>
        <taxon>Methanobacteriati</taxon>
        <taxon>Methanobacteriota</taxon>
        <taxon>Stenosarchaea group</taxon>
        <taxon>Methanomicrobia</taxon>
        <taxon>Methanosarcinales</taxon>
        <taxon>Methanosarcinaceae</taxon>
        <taxon>Methanosarcina</taxon>
    </lineage>
</organism>
<sequence length="395" mass="42692">MTENIIESGDPQARYDSVIEKDSKYVMQTYGRQPLVLSKGKGAVVQDIYGKEYIDCVAGIAVNNVGHCHPTVVKAIQAQAENLIHVSNLYYTEIQAEFAETLASITGMERVFFCNSGAESVEAAMKLARVATGKSAFVAAEHSFHGRTIGALSVTHKSMYRDPFMPPVSSETTFVPYSDAEAIRQAISENTAAVILEPIQGEGGINIPDPGYLKEVREICDETGALLIFDEVQTGFGRTGTWFCKEQFGVEPDIMSMSKAIGGGFPMGAIAAHNGINFGRGQHASTFGGGPLACAAALASVKVIREEKLLERSKEMGAYFMKKLAGMVRDDVVEVRGKGLMIGVEIKYPCGKFVDFAREQGVLVNCTSDSVLRLVPPLVITKEQIDTVVDVLEQA</sequence>
<proteinExistence type="inferred from homology"/>